<proteinExistence type="inferred from homology"/>
<keyword id="KW-0028">Amino-acid biosynthesis</keyword>
<keyword id="KW-0963">Cytoplasm</keyword>
<keyword id="KW-0368">Histidine biosynthesis</keyword>
<keyword id="KW-1185">Reference proteome</keyword>
<organism>
    <name type="scientific">Thiobacillus denitrificans (strain ATCC 25259 / T1)</name>
    <dbReference type="NCBI Taxonomy" id="292415"/>
    <lineage>
        <taxon>Bacteria</taxon>
        <taxon>Pseudomonadati</taxon>
        <taxon>Pseudomonadota</taxon>
        <taxon>Betaproteobacteria</taxon>
        <taxon>Nitrosomonadales</taxon>
        <taxon>Thiobacillaceae</taxon>
        <taxon>Thiobacillus</taxon>
    </lineage>
</organism>
<accession>Q3SL58</accession>
<comment type="function">
    <text evidence="1">Required for the first step of histidine biosynthesis. May allow the feedback regulation of ATP phosphoribosyltransferase activity by histidine.</text>
</comment>
<comment type="pathway">
    <text evidence="1">Amino-acid biosynthesis; L-histidine biosynthesis; L-histidine from 5-phospho-alpha-D-ribose 1-diphosphate: step 1/9.</text>
</comment>
<comment type="subunit">
    <text evidence="1">Heteromultimer composed of HisG and HisZ subunits.</text>
</comment>
<comment type="subcellular location">
    <subcellularLocation>
        <location evidence="1">Cytoplasm</location>
    </subcellularLocation>
</comment>
<comment type="miscellaneous">
    <text>This function is generally fulfilled by the C-terminal part of HisG, which is missing in some bacteria such as this one.</text>
</comment>
<comment type="similarity">
    <text evidence="1">Belongs to the class-II aminoacyl-tRNA synthetase family. HisZ subfamily.</text>
</comment>
<feature type="chain" id="PRO_0000242867" description="ATP phosphoribosyltransferase regulatory subunit">
    <location>
        <begin position="1"/>
        <end position="321"/>
    </location>
</feature>
<protein>
    <recommendedName>
        <fullName evidence="1">ATP phosphoribosyltransferase regulatory subunit</fullName>
    </recommendedName>
</protein>
<reference key="1">
    <citation type="journal article" date="2006" name="J. Bacteriol.">
        <title>The genome sequence of the obligately chemolithoautotrophic, facultatively anaerobic bacterium Thiobacillus denitrificans.</title>
        <authorList>
            <person name="Beller H.R."/>
            <person name="Chain P.S."/>
            <person name="Letain T.E."/>
            <person name="Chakicherla A."/>
            <person name="Larimer F.W."/>
            <person name="Richardson P.M."/>
            <person name="Coleman M.A."/>
            <person name="Wood A.P."/>
            <person name="Kelly D.P."/>
        </authorList>
    </citation>
    <scope>NUCLEOTIDE SEQUENCE [LARGE SCALE GENOMIC DNA]</scope>
    <source>
        <strain>ATCC 25259 / T1</strain>
    </source>
</reference>
<gene>
    <name evidence="1" type="primary">hisZ</name>
    <name type="ordered locus">Tbd_0606</name>
</gene>
<sequence>MTAWLLPENVEDVLPPQAWRLEAMRRALLDLFRERGYQLVIPPLIEYVESLLTGVGADLDLKTFKLVDQLSGRLMAVRADITPQVARIDAHLLGANAINRLCYTGSVLHTQSDGFHRSREPIQIGAEVYGDAGIEADLEILSLMLQGLAACGVEGVQLDVGHVGVYRALAQEAGFDNATEHELFCALQAKDASAVDVLTAGLPMALRDAFAALPQLYGGREVLAEARARLPHLPAVAAALDTLVSLDQALGGVELAYDLAELRGYGYHSGVVFAAYTRGRSHAIAQGGRYDEVGRVFGRARPATGFSMDLRELVVAGSASE</sequence>
<evidence type="ECO:0000255" key="1">
    <source>
        <dbReference type="HAMAP-Rule" id="MF_00125"/>
    </source>
</evidence>
<dbReference type="EMBL" id="CP000116">
    <property type="protein sequence ID" value="AAZ96559.1"/>
    <property type="molecule type" value="Genomic_DNA"/>
</dbReference>
<dbReference type="RefSeq" id="WP_011311118.1">
    <property type="nucleotide sequence ID" value="NC_007404.1"/>
</dbReference>
<dbReference type="SMR" id="Q3SL58"/>
<dbReference type="STRING" id="292415.Tbd_0606"/>
<dbReference type="KEGG" id="tbd:Tbd_0606"/>
<dbReference type="eggNOG" id="COG3705">
    <property type="taxonomic scope" value="Bacteria"/>
</dbReference>
<dbReference type="HOGENOM" id="CLU_025113_0_1_4"/>
<dbReference type="OrthoDB" id="9769617at2"/>
<dbReference type="UniPathway" id="UPA00031">
    <property type="reaction ID" value="UER00006"/>
</dbReference>
<dbReference type="Proteomes" id="UP000008291">
    <property type="component" value="Chromosome"/>
</dbReference>
<dbReference type="GO" id="GO:0005737">
    <property type="term" value="C:cytoplasm"/>
    <property type="evidence" value="ECO:0007669"/>
    <property type="project" value="UniProtKB-SubCell"/>
</dbReference>
<dbReference type="GO" id="GO:0004821">
    <property type="term" value="F:histidine-tRNA ligase activity"/>
    <property type="evidence" value="ECO:0007669"/>
    <property type="project" value="TreeGrafter"/>
</dbReference>
<dbReference type="GO" id="GO:0006427">
    <property type="term" value="P:histidyl-tRNA aminoacylation"/>
    <property type="evidence" value="ECO:0007669"/>
    <property type="project" value="TreeGrafter"/>
</dbReference>
<dbReference type="GO" id="GO:0000105">
    <property type="term" value="P:L-histidine biosynthetic process"/>
    <property type="evidence" value="ECO:0007669"/>
    <property type="project" value="UniProtKB-UniRule"/>
</dbReference>
<dbReference type="CDD" id="cd00773">
    <property type="entry name" value="HisRS-like_core"/>
    <property type="match status" value="1"/>
</dbReference>
<dbReference type="Gene3D" id="3.30.930.10">
    <property type="entry name" value="Bira Bifunctional Protein, Domain 2"/>
    <property type="match status" value="1"/>
</dbReference>
<dbReference type="HAMAP" id="MF_00125">
    <property type="entry name" value="HisZ"/>
    <property type="match status" value="1"/>
</dbReference>
<dbReference type="InterPro" id="IPR045864">
    <property type="entry name" value="aa-tRNA-synth_II/BPL/LPL"/>
</dbReference>
<dbReference type="InterPro" id="IPR041715">
    <property type="entry name" value="HisRS-like_core"/>
</dbReference>
<dbReference type="InterPro" id="IPR004516">
    <property type="entry name" value="HisRS/HisZ"/>
</dbReference>
<dbReference type="InterPro" id="IPR004517">
    <property type="entry name" value="HisZ"/>
</dbReference>
<dbReference type="NCBIfam" id="TIGR00443">
    <property type="entry name" value="hisZ_biosyn_reg"/>
    <property type="match status" value="1"/>
</dbReference>
<dbReference type="NCBIfam" id="NF008935">
    <property type="entry name" value="PRK12292.1-1"/>
    <property type="match status" value="1"/>
</dbReference>
<dbReference type="NCBIfam" id="NF009086">
    <property type="entry name" value="PRK12421.1"/>
    <property type="match status" value="1"/>
</dbReference>
<dbReference type="PANTHER" id="PTHR43707:SF1">
    <property type="entry name" value="HISTIDINE--TRNA LIGASE, MITOCHONDRIAL-RELATED"/>
    <property type="match status" value="1"/>
</dbReference>
<dbReference type="PANTHER" id="PTHR43707">
    <property type="entry name" value="HISTIDYL-TRNA SYNTHETASE"/>
    <property type="match status" value="1"/>
</dbReference>
<dbReference type="Pfam" id="PF13393">
    <property type="entry name" value="tRNA-synt_His"/>
    <property type="match status" value="1"/>
</dbReference>
<dbReference type="PIRSF" id="PIRSF001549">
    <property type="entry name" value="His-tRNA_synth"/>
    <property type="match status" value="1"/>
</dbReference>
<dbReference type="SUPFAM" id="SSF55681">
    <property type="entry name" value="Class II aaRS and biotin synthetases"/>
    <property type="match status" value="1"/>
</dbReference>
<name>HISZ_THIDA</name>